<comment type="function">
    <text evidence="1">Catalyzes the ATP-dependent condensation of GlcN-Ins and L-cysteine to form L-Cys-GlcN-Ins.</text>
</comment>
<comment type="catalytic activity">
    <reaction>
        <text>1D-myo-inositol 2-amino-2-deoxy-alpha-D-glucopyranoside + L-cysteine + ATP = 1D-myo-inositol 2-(L-cysteinylamino)-2-deoxy-alpha-D-glucopyranoside + AMP + diphosphate + H(+)</text>
        <dbReference type="Rhea" id="RHEA:26176"/>
        <dbReference type="ChEBI" id="CHEBI:15378"/>
        <dbReference type="ChEBI" id="CHEBI:30616"/>
        <dbReference type="ChEBI" id="CHEBI:33019"/>
        <dbReference type="ChEBI" id="CHEBI:35235"/>
        <dbReference type="ChEBI" id="CHEBI:58886"/>
        <dbReference type="ChEBI" id="CHEBI:58887"/>
        <dbReference type="ChEBI" id="CHEBI:456215"/>
        <dbReference type="EC" id="6.3.1.13"/>
    </reaction>
</comment>
<comment type="cofactor">
    <cofactor evidence="1">
        <name>Zn(2+)</name>
        <dbReference type="ChEBI" id="CHEBI:29105"/>
    </cofactor>
    <text evidence="1">Binds 1 zinc ion per subunit.</text>
</comment>
<comment type="subunit">
    <text evidence="1">Monomer.</text>
</comment>
<comment type="similarity">
    <text evidence="2">Belongs to the class-I aminoacyl-tRNA synthetase family. MshC subfamily.</text>
</comment>
<sequence length="412" mass="44914">MQSWSDTALPTVPGAGPPLRLYDTADRQVRPVAPGATATMYVCGITPYDATHLGHAATYLTFDLVNRVLRDGGHDVHYVQNVTDVDDPLFERAARDGVDWRELGSREIELFRTDMAALRVLPPREYVGAVESVEEVVEFVQKLLANGAAYVVDDPDFPDIYFRTDATEQFGYESGYDRATMERLFAERGGDPDRPGKRDPLDALLWRAARPGEPSWPAPFGAGRPGWHIECSAIALNRLGPEFDIQGGGSDLIYPHHEYSAAHAESVVAGRRFARHYVHAGLIGLDGEKMSKSRGNLVLVSTLRKDGVDPAAIRLGLLDGHYRQDRMWTDAVLEAALARLARWRSATALSAGPAAHDTIARLRQHLADDLDSPKALAAVDNWVTEALDYGGSDSGAPAAIAEAVDALLGVRL</sequence>
<keyword id="KW-0067">ATP-binding</keyword>
<keyword id="KW-0436">Ligase</keyword>
<keyword id="KW-0479">Metal-binding</keyword>
<keyword id="KW-0547">Nucleotide-binding</keyword>
<keyword id="KW-1185">Reference proteome</keyword>
<keyword id="KW-0862">Zinc</keyword>
<proteinExistence type="inferred from homology"/>
<reference key="1">
    <citation type="journal article" date="2004" name="Proc. Natl. Acad. Sci. U.S.A.">
        <title>The complete genomic sequence of Nocardia farcinica IFM 10152.</title>
        <authorList>
            <person name="Ishikawa J."/>
            <person name="Yamashita A."/>
            <person name="Mikami Y."/>
            <person name="Hoshino Y."/>
            <person name="Kurita H."/>
            <person name="Hotta K."/>
            <person name="Shiba T."/>
            <person name="Hattori M."/>
        </authorList>
    </citation>
    <scope>NUCLEOTIDE SEQUENCE [LARGE SCALE GENOMIC DNA]</scope>
    <source>
        <strain>IFM 10152</strain>
    </source>
</reference>
<dbReference type="EC" id="6.3.1.13"/>
<dbReference type="EMBL" id="AP006618">
    <property type="protein sequence ID" value="BAD57781.1"/>
    <property type="molecule type" value="Genomic_DNA"/>
</dbReference>
<dbReference type="RefSeq" id="WP_011209466.1">
    <property type="nucleotide sequence ID" value="NC_006361.1"/>
</dbReference>
<dbReference type="SMR" id="Q5YVL0"/>
<dbReference type="STRING" id="247156.NFA_29340"/>
<dbReference type="GeneID" id="61133655"/>
<dbReference type="KEGG" id="nfa:NFA_29340"/>
<dbReference type="eggNOG" id="COG0215">
    <property type="taxonomic scope" value="Bacteria"/>
</dbReference>
<dbReference type="HOGENOM" id="CLU_013528_0_0_11"/>
<dbReference type="OrthoDB" id="9815130at2"/>
<dbReference type="Proteomes" id="UP000006820">
    <property type="component" value="Chromosome"/>
</dbReference>
<dbReference type="GO" id="GO:0005829">
    <property type="term" value="C:cytosol"/>
    <property type="evidence" value="ECO:0007669"/>
    <property type="project" value="TreeGrafter"/>
</dbReference>
<dbReference type="GO" id="GO:0005524">
    <property type="term" value="F:ATP binding"/>
    <property type="evidence" value="ECO:0007669"/>
    <property type="project" value="UniProtKB-KW"/>
</dbReference>
<dbReference type="GO" id="GO:0035446">
    <property type="term" value="F:cysteine-glucosaminylinositol ligase activity"/>
    <property type="evidence" value="ECO:0007669"/>
    <property type="project" value="UniProtKB-UniRule"/>
</dbReference>
<dbReference type="GO" id="GO:0004817">
    <property type="term" value="F:cysteine-tRNA ligase activity"/>
    <property type="evidence" value="ECO:0007669"/>
    <property type="project" value="TreeGrafter"/>
</dbReference>
<dbReference type="GO" id="GO:0008270">
    <property type="term" value="F:zinc ion binding"/>
    <property type="evidence" value="ECO:0007669"/>
    <property type="project" value="UniProtKB-UniRule"/>
</dbReference>
<dbReference type="GO" id="GO:0006423">
    <property type="term" value="P:cysteinyl-tRNA aminoacylation"/>
    <property type="evidence" value="ECO:0007669"/>
    <property type="project" value="TreeGrafter"/>
</dbReference>
<dbReference type="GO" id="GO:0010125">
    <property type="term" value="P:mycothiol biosynthetic process"/>
    <property type="evidence" value="ECO:0007669"/>
    <property type="project" value="UniProtKB-UniRule"/>
</dbReference>
<dbReference type="CDD" id="cd07955">
    <property type="entry name" value="Anticodon_Ia_Cys_like"/>
    <property type="match status" value="1"/>
</dbReference>
<dbReference type="CDD" id="cd00672">
    <property type="entry name" value="CysRS_core"/>
    <property type="match status" value="1"/>
</dbReference>
<dbReference type="FunFam" id="3.40.50.620:FF:000134">
    <property type="entry name" value="L-cysteine:1D-myo-inositol 2-amino-2-deoxy-alpha-D-glucopyranoside ligase"/>
    <property type="match status" value="1"/>
</dbReference>
<dbReference type="Gene3D" id="1.20.120.640">
    <property type="entry name" value="Anticodon-binding domain of a subclass of class I aminoacyl-tRNA synthetases"/>
    <property type="match status" value="1"/>
</dbReference>
<dbReference type="Gene3D" id="3.40.50.620">
    <property type="entry name" value="HUPs"/>
    <property type="match status" value="1"/>
</dbReference>
<dbReference type="HAMAP" id="MF_01697">
    <property type="entry name" value="MshC"/>
    <property type="match status" value="1"/>
</dbReference>
<dbReference type="InterPro" id="IPR024909">
    <property type="entry name" value="Cys-tRNA/MSH_ligase"/>
</dbReference>
<dbReference type="InterPro" id="IPR017812">
    <property type="entry name" value="Mycothiol_ligase_MshC"/>
</dbReference>
<dbReference type="InterPro" id="IPR014729">
    <property type="entry name" value="Rossmann-like_a/b/a_fold"/>
</dbReference>
<dbReference type="InterPro" id="IPR032678">
    <property type="entry name" value="tRNA-synt_1_cat_dom"/>
</dbReference>
<dbReference type="NCBIfam" id="TIGR03447">
    <property type="entry name" value="mycothiol_MshC"/>
    <property type="match status" value="1"/>
</dbReference>
<dbReference type="PANTHER" id="PTHR10890:SF3">
    <property type="entry name" value="CYSTEINE--TRNA LIGASE, CYTOPLASMIC"/>
    <property type="match status" value="1"/>
</dbReference>
<dbReference type="PANTHER" id="PTHR10890">
    <property type="entry name" value="CYSTEINYL-TRNA SYNTHETASE"/>
    <property type="match status" value="1"/>
</dbReference>
<dbReference type="Pfam" id="PF01406">
    <property type="entry name" value="tRNA-synt_1e"/>
    <property type="match status" value="1"/>
</dbReference>
<dbReference type="PRINTS" id="PR00983">
    <property type="entry name" value="TRNASYNTHCYS"/>
</dbReference>
<dbReference type="SUPFAM" id="SSF52374">
    <property type="entry name" value="Nucleotidylyl transferase"/>
    <property type="match status" value="1"/>
</dbReference>
<organism>
    <name type="scientific">Nocardia farcinica (strain IFM 10152)</name>
    <dbReference type="NCBI Taxonomy" id="247156"/>
    <lineage>
        <taxon>Bacteria</taxon>
        <taxon>Bacillati</taxon>
        <taxon>Actinomycetota</taxon>
        <taxon>Actinomycetes</taxon>
        <taxon>Mycobacteriales</taxon>
        <taxon>Nocardiaceae</taxon>
        <taxon>Nocardia</taxon>
    </lineage>
</organism>
<name>MSHC_NOCFA</name>
<gene>
    <name type="primary">mshC</name>
    <name type="synonym">cysS2</name>
    <name type="ordered locus">NFA_29340</name>
</gene>
<protein>
    <recommendedName>
        <fullName>L-cysteine:1D-myo-inositol 2-amino-2-deoxy-alpha-D-glucopyranoside ligase</fullName>
        <shortName>L-Cys:GlcN-Ins ligase</shortName>
        <ecNumber>6.3.1.13</ecNumber>
    </recommendedName>
    <alternativeName>
        <fullName>Mycothiol ligase</fullName>
        <shortName>MSH ligase</shortName>
    </alternativeName>
</protein>
<feature type="chain" id="PRO_0000159447" description="L-cysteine:1D-myo-inositol 2-amino-2-deoxy-alpha-D-glucopyranoside ligase">
    <location>
        <begin position="1"/>
        <end position="412"/>
    </location>
</feature>
<feature type="short sequence motif" description="'HIGH' region">
    <location>
        <begin position="45"/>
        <end position="55"/>
    </location>
</feature>
<feature type="short sequence motif" description="'ERGGDP' region">
    <location>
        <begin position="187"/>
        <end position="192"/>
    </location>
</feature>
<feature type="short sequence motif" description="'KMSKS' region">
    <location>
        <begin position="289"/>
        <end position="293"/>
    </location>
</feature>
<feature type="binding site" evidence="1">
    <location>
        <begin position="43"/>
        <end position="46"/>
    </location>
    <ligand>
        <name>L-cysteinyl-5'-AMP</name>
        <dbReference type="ChEBI" id="CHEBI:144924"/>
    </ligand>
</feature>
<feature type="binding site" evidence="1">
    <location>
        <position position="43"/>
    </location>
    <ligand>
        <name>Zn(2+)</name>
        <dbReference type="ChEBI" id="CHEBI:29105"/>
    </ligand>
</feature>
<feature type="binding site" evidence="1">
    <location>
        <position position="58"/>
    </location>
    <ligand>
        <name>L-cysteinyl-5'-AMP</name>
        <dbReference type="ChEBI" id="CHEBI:144924"/>
    </ligand>
</feature>
<feature type="binding site" evidence="1">
    <location>
        <begin position="81"/>
        <end position="83"/>
    </location>
    <ligand>
        <name>L-cysteinyl-5'-AMP</name>
        <dbReference type="ChEBI" id="CHEBI:144924"/>
    </ligand>
</feature>
<feature type="binding site" evidence="1">
    <location>
        <position position="227"/>
    </location>
    <ligand>
        <name>L-cysteinyl-5'-AMP</name>
        <dbReference type="ChEBI" id="CHEBI:144924"/>
    </ligand>
</feature>
<feature type="binding site" evidence="1">
    <location>
        <position position="231"/>
    </location>
    <ligand>
        <name>Zn(2+)</name>
        <dbReference type="ChEBI" id="CHEBI:29105"/>
    </ligand>
</feature>
<feature type="binding site" evidence="1">
    <location>
        <begin position="249"/>
        <end position="251"/>
    </location>
    <ligand>
        <name>L-cysteinyl-5'-AMP</name>
        <dbReference type="ChEBI" id="CHEBI:144924"/>
    </ligand>
</feature>
<feature type="binding site" evidence="1">
    <location>
        <position position="256"/>
    </location>
    <ligand>
        <name>Zn(2+)</name>
        <dbReference type="ChEBI" id="CHEBI:29105"/>
    </ligand>
</feature>
<feature type="binding site" evidence="1">
    <location>
        <position position="283"/>
    </location>
    <ligand>
        <name>L-cysteinyl-5'-AMP</name>
        <dbReference type="ChEBI" id="CHEBI:144924"/>
    </ligand>
</feature>
<evidence type="ECO:0000250" key="1"/>
<evidence type="ECO:0000305" key="2"/>
<accession>Q5YVL0</accession>